<dbReference type="EC" id="3.4.13.21" evidence="1"/>
<dbReference type="EMBL" id="CP000266">
    <property type="protein sequence ID" value="ABF06078.1"/>
    <property type="molecule type" value="Genomic_DNA"/>
</dbReference>
<dbReference type="RefSeq" id="WP_000421772.1">
    <property type="nucleotide sequence ID" value="NC_008258.1"/>
</dbReference>
<dbReference type="SMR" id="Q0SXY7"/>
<dbReference type="MEROPS" id="S51.001"/>
<dbReference type="GeneID" id="75169467"/>
<dbReference type="KEGG" id="sfv:SFV_4092"/>
<dbReference type="HOGENOM" id="CLU_071689_0_0_6"/>
<dbReference type="Proteomes" id="UP000000659">
    <property type="component" value="Chromosome"/>
</dbReference>
<dbReference type="GO" id="GO:0005737">
    <property type="term" value="C:cytoplasm"/>
    <property type="evidence" value="ECO:0007669"/>
    <property type="project" value="UniProtKB-SubCell"/>
</dbReference>
<dbReference type="GO" id="GO:0016805">
    <property type="term" value="F:dipeptidase activity"/>
    <property type="evidence" value="ECO:0007669"/>
    <property type="project" value="UniProtKB-UniRule"/>
</dbReference>
<dbReference type="GO" id="GO:0008236">
    <property type="term" value="F:serine-type peptidase activity"/>
    <property type="evidence" value="ECO:0007669"/>
    <property type="project" value="UniProtKB-KW"/>
</dbReference>
<dbReference type="GO" id="GO:0006508">
    <property type="term" value="P:proteolysis"/>
    <property type="evidence" value="ECO:0007669"/>
    <property type="project" value="UniProtKB-UniRule"/>
</dbReference>
<dbReference type="CDD" id="cd03146">
    <property type="entry name" value="GAT1_Peptidase_E"/>
    <property type="match status" value="1"/>
</dbReference>
<dbReference type="FunFam" id="3.40.50.880:FF:000007">
    <property type="entry name" value="Peptidase E"/>
    <property type="match status" value="1"/>
</dbReference>
<dbReference type="Gene3D" id="3.40.50.880">
    <property type="match status" value="1"/>
</dbReference>
<dbReference type="HAMAP" id="MF_00510">
    <property type="entry name" value="Peptidase_E"/>
    <property type="match status" value="1"/>
</dbReference>
<dbReference type="InterPro" id="IPR029062">
    <property type="entry name" value="Class_I_gatase-like"/>
</dbReference>
<dbReference type="InterPro" id="IPR005320">
    <property type="entry name" value="Peptidase_S51"/>
</dbReference>
<dbReference type="InterPro" id="IPR023172">
    <property type="entry name" value="Peptidase_S51_dipeptidase-E"/>
</dbReference>
<dbReference type="NCBIfam" id="NF003642">
    <property type="entry name" value="PRK05282.1"/>
    <property type="match status" value="1"/>
</dbReference>
<dbReference type="PANTHER" id="PTHR20842:SF0">
    <property type="entry name" value="ALPHA-ASPARTYL DIPEPTIDASE"/>
    <property type="match status" value="1"/>
</dbReference>
<dbReference type="PANTHER" id="PTHR20842">
    <property type="entry name" value="PROTEASE S51 ALPHA-ASPARTYL DIPEPTIDASE"/>
    <property type="match status" value="1"/>
</dbReference>
<dbReference type="Pfam" id="PF03575">
    <property type="entry name" value="Peptidase_S51"/>
    <property type="match status" value="1"/>
</dbReference>
<dbReference type="SUPFAM" id="SSF52317">
    <property type="entry name" value="Class I glutamine amidotransferase-like"/>
    <property type="match status" value="1"/>
</dbReference>
<gene>
    <name evidence="1" type="primary">pepE</name>
    <name type="ordered locus">SFV_4092</name>
</gene>
<evidence type="ECO:0000255" key="1">
    <source>
        <dbReference type="HAMAP-Rule" id="MF_00510"/>
    </source>
</evidence>
<name>PEPE_SHIF8</name>
<feature type="chain" id="PRO_1000050622" description="Peptidase E">
    <location>
        <begin position="1"/>
        <end position="229"/>
    </location>
</feature>
<feature type="active site" description="Charge relay system" evidence="1">
    <location>
        <position position="120"/>
    </location>
</feature>
<feature type="active site" description="Charge relay system" evidence="1">
    <location>
        <position position="135"/>
    </location>
</feature>
<feature type="active site" description="Charge relay system" evidence="1">
    <location>
        <position position="157"/>
    </location>
</feature>
<keyword id="KW-0963">Cytoplasm</keyword>
<keyword id="KW-0224">Dipeptidase</keyword>
<keyword id="KW-0378">Hydrolase</keyword>
<keyword id="KW-0645">Protease</keyword>
<keyword id="KW-0720">Serine protease</keyword>
<accession>Q0SXY7</accession>
<sequence length="229" mass="24628">MELLLLSNSTLPGKAWLEHALPLIAEQLQGRRSAVFIPFAGVTQTWDDYTEKTAAVLAPLGVSVTGIHSVVDPVAAIENAEIVIVGGGNTFQLLKQCRERGLLAPITDVVKRGALYIGWSAGANLACPTIRTTNDMPIVDPQGFDALNLFPLQINPHFTNALPEGHKGETREQRIRELLVVAPELTIIGLPEGNWITVSKGHATLGGPNTTYVFKAGEEAVPLEAGHRF</sequence>
<organism>
    <name type="scientific">Shigella flexneri serotype 5b (strain 8401)</name>
    <dbReference type="NCBI Taxonomy" id="373384"/>
    <lineage>
        <taxon>Bacteria</taxon>
        <taxon>Pseudomonadati</taxon>
        <taxon>Pseudomonadota</taxon>
        <taxon>Gammaproteobacteria</taxon>
        <taxon>Enterobacterales</taxon>
        <taxon>Enterobacteriaceae</taxon>
        <taxon>Shigella</taxon>
    </lineage>
</organism>
<proteinExistence type="inferred from homology"/>
<reference key="1">
    <citation type="journal article" date="2006" name="BMC Genomics">
        <title>Complete genome sequence of Shigella flexneri 5b and comparison with Shigella flexneri 2a.</title>
        <authorList>
            <person name="Nie H."/>
            <person name="Yang F."/>
            <person name="Zhang X."/>
            <person name="Yang J."/>
            <person name="Chen L."/>
            <person name="Wang J."/>
            <person name="Xiong Z."/>
            <person name="Peng J."/>
            <person name="Sun L."/>
            <person name="Dong J."/>
            <person name="Xue Y."/>
            <person name="Xu X."/>
            <person name="Chen S."/>
            <person name="Yao Z."/>
            <person name="Shen Y."/>
            <person name="Jin Q."/>
        </authorList>
    </citation>
    <scope>NUCLEOTIDE SEQUENCE [LARGE SCALE GENOMIC DNA]</scope>
    <source>
        <strain>8401</strain>
    </source>
</reference>
<comment type="function">
    <text evidence="1">Hydrolyzes dipeptides containing N-terminal aspartate residues. May play a role in allowing the cell to use peptide aspartate to spare carbon otherwise required for the synthesis of the aspartate family of amino acids.</text>
</comment>
<comment type="catalytic activity">
    <reaction evidence="1">
        <text>Dipeptidase E catalyzes the hydrolysis of dipeptides Asp-|-Xaa. It does not act on peptides with N-terminal Glu, Asn or Gln, nor does it cleave isoaspartyl peptides.</text>
        <dbReference type="EC" id="3.4.13.21"/>
    </reaction>
</comment>
<comment type="subcellular location">
    <subcellularLocation>
        <location evidence="1">Cytoplasm</location>
    </subcellularLocation>
</comment>
<comment type="similarity">
    <text evidence="1">Belongs to the peptidase S51 family.</text>
</comment>
<protein>
    <recommendedName>
        <fullName evidence="1">Peptidase E</fullName>
        <ecNumber evidence="1">3.4.13.21</ecNumber>
    </recommendedName>
    <alternativeName>
        <fullName evidence="1">Alpha-aspartyl dipeptidase</fullName>
    </alternativeName>
    <alternativeName>
        <fullName evidence="1">Asp-specific dipeptidase</fullName>
    </alternativeName>
    <alternativeName>
        <fullName evidence="1">Dipeptidase E</fullName>
    </alternativeName>
</protein>